<evidence type="ECO:0000250" key="1">
    <source>
        <dbReference type="UniProtKB" id="P62623"/>
    </source>
</evidence>
<evidence type="ECO:0000255" key="2">
    <source>
        <dbReference type="HAMAP-Rule" id="MF_00191"/>
    </source>
</evidence>
<evidence type="ECO:0000269" key="3">
    <source>
    </source>
</evidence>
<evidence type="ECO:0000269" key="4">
    <source>
    </source>
</evidence>
<evidence type="ECO:0000305" key="5">
    <source>
    </source>
</evidence>
<evidence type="ECO:0007829" key="6">
    <source>
        <dbReference type="PDB" id="3DNF"/>
    </source>
</evidence>
<reference key="1">
    <citation type="journal article" date="1998" name="Nature">
        <title>The complete genome of the hyperthermophilic bacterium Aquifex aeolicus.</title>
        <authorList>
            <person name="Deckert G."/>
            <person name="Warren P.V."/>
            <person name="Gaasterland T."/>
            <person name="Young W.G."/>
            <person name="Lenox A.L."/>
            <person name="Graham D.E."/>
            <person name="Overbeek R."/>
            <person name="Snead M.A."/>
            <person name="Keller M."/>
            <person name="Aujay M."/>
            <person name="Huber R."/>
            <person name="Feldman R.A."/>
            <person name="Short J.M."/>
            <person name="Olsen G.J."/>
            <person name="Swanson R.V."/>
        </authorList>
    </citation>
    <scope>NUCLEOTIDE SEQUENCE [LARGE SCALE GENOMIC DNA]</scope>
    <source>
        <strain>VF5</strain>
    </source>
</reference>
<reference key="2">
    <citation type="journal article" date="2002" name="FEBS Lett.">
        <title>LytB protein catalyzes the terminal step of the 2-C-methyl-D-erythritol-4-phosphate pathway of isoprenoid biosynthesis.</title>
        <authorList>
            <person name="Altincicek B."/>
            <person name="Duin E.C."/>
            <person name="Reichenberg A."/>
            <person name="Hedderich R."/>
            <person name="Kollas A.-K."/>
            <person name="Hintz M."/>
            <person name="Wagner S."/>
            <person name="Wiesner J."/>
            <person name="Beck E."/>
            <person name="Jomaa H."/>
        </authorList>
    </citation>
    <scope>FUNCTION</scope>
    <scope>CATALYTIC ACTIVITY</scope>
    <scope>PRESENCE OF AN IRON-SULFUR CLUSTER</scope>
    <scope>ACTIVITY REGULATION</scope>
    <scope>BIOPHYSICOCHEMICAL PROPERTIES</scope>
</reference>
<reference key="3">
    <citation type="journal article" date="2008" name="J. Am. Chem. Soc.">
        <title>Structure of (E)-4-hydroxy-3-methyl-but-2-enyl diphosphate reductase, the terminal enzyme of the non-mevalonate pathway.</title>
        <authorList>
            <person name="Rekittke I."/>
            <person name="Wiesner J."/>
            <person name="Roehrich R."/>
            <person name="Demmer U."/>
            <person name="Warkentin E."/>
            <person name="Xu W."/>
            <person name="Troschke K."/>
            <person name="Hintz M."/>
            <person name="No J.H."/>
            <person name="Duin E.C."/>
            <person name="Oldfield E."/>
            <person name="Jomaa H."/>
            <person name="Ermler U."/>
        </authorList>
    </citation>
    <scope>X-RAY CRYSTALLOGRAPHY (1.65 ANGSTROMS) IN COMPLEX WITH IRON-SULFUR (3FE-4S)</scope>
    <scope>COFACTOR</scope>
</reference>
<feature type="chain" id="PRO_0000128766" description="4-hydroxy-3-methylbut-2-enyl diphosphate reductase">
    <location>
        <begin position="1"/>
        <end position="289"/>
    </location>
</feature>
<feature type="active site" description="Proton donor" evidence="2">
    <location>
        <position position="126"/>
    </location>
</feature>
<feature type="binding site" evidence="2 5">
    <location>
        <position position="13"/>
    </location>
    <ligand>
        <name>[4Fe-4S] cluster</name>
        <dbReference type="ChEBI" id="CHEBI:49883"/>
    </ligand>
</feature>
<feature type="binding site" evidence="2">
    <location>
        <position position="42"/>
    </location>
    <ligand>
        <name>(2E)-4-hydroxy-3-methylbut-2-enyl diphosphate</name>
        <dbReference type="ChEBI" id="CHEBI:128753"/>
    </ligand>
</feature>
<feature type="binding site" evidence="2">
    <location>
        <position position="42"/>
    </location>
    <ligand>
        <name>dimethylallyl diphosphate</name>
        <dbReference type="ChEBI" id="CHEBI:57623"/>
    </ligand>
</feature>
<feature type="binding site" evidence="2">
    <location>
        <position position="42"/>
    </location>
    <ligand>
        <name>isopentenyl diphosphate</name>
        <dbReference type="ChEBI" id="CHEBI:128769"/>
    </ligand>
</feature>
<feature type="binding site" evidence="2">
    <location>
        <position position="74"/>
    </location>
    <ligand>
        <name>(2E)-4-hydroxy-3-methylbut-2-enyl diphosphate</name>
        <dbReference type="ChEBI" id="CHEBI:128753"/>
    </ligand>
</feature>
<feature type="binding site" evidence="2">
    <location>
        <position position="74"/>
    </location>
    <ligand>
        <name>dimethylallyl diphosphate</name>
        <dbReference type="ChEBI" id="CHEBI:57623"/>
    </ligand>
</feature>
<feature type="binding site" evidence="2">
    <location>
        <position position="74"/>
    </location>
    <ligand>
        <name>isopentenyl diphosphate</name>
        <dbReference type="ChEBI" id="CHEBI:128769"/>
    </ligand>
</feature>
<feature type="binding site" evidence="2 5">
    <location>
        <position position="96"/>
    </location>
    <ligand>
        <name>[4Fe-4S] cluster</name>
        <dbReference type="ChEBI" id="CHEBI:49883"/>
    </ligand>
</feature>
<feature type="binding site" evidence="2">
    <location>
        <position position="124"/>
    </location>
    <ligand>
        <name>(2E)-4-hydroxy-3-methylbut-2-enyl diphosphate</name>
        <dbReference type="ChEBI" id="CHEBI:128753"/>
    </ligand>
</feature>
<feature type="binding site" evidence="2">
    <location>
        <position position="124"/>
    </location>
    <ligand>
        <name>dimethylallyl diphosphate</name>
        <dbReference type="ChEBI" id="CHEBI:57623"/>
    </ligand>
</feature>
<feature type="binding site" evidence="2">
    <location>
        <position position="124"/>
    </location>
    <ligand>
        <name>isopentenyl diphosphate</name>
        <dbReference type="ChEBI" id="CHEBI:128769"/>
    </ligand>
</feature>
<feature type="binding site" evidence="2">
    <location>
        <position position="165"/>
    </location>
    <ligand>
        <name>(2E)-4-hydroxy-3-methylbut-2-enyl diphosphate</name>
        <dbReference type="ChEBI" id="CHEBI:128753"/>
    </ligand>
</feature>
<feature type="binding site" evidence="2 5">
    <location>
        <position position="193"/>
    </location>
    <ligand>
        <name>[4Fe-4S] cluster</name>
        <dbReference type="ChEBI" id="CHEBI:49883"/>
    </ligand>
</feature>
<feature type="binding site" evidence="2">
    <location>
        <position position="221"/>
    </location>
    <ligand>
        <name>(2E)-4-hydroxy-3-methylbut-2-enyl diphosphate</name>
        <dbReference type="ChEBI" id="CHEBI:128753"/>
    </ligand>
</feature>
<feature type="binding site" evidence="2">
    <location>
        <position position="221"/>
    </location>
    <ligand>
        <name>dimethylallyl diphosphate</name>
        <dbReference type="ChEBI" id="CHEBI:57623"/>
    </ligand>
</feature>
<feature type="binding site" evidence="2">
    <location>
        <position position="221"/>
    </location>
    <ligand>
        <name>isopentenyl diphosphate</name>
        <dbReference type="ChEBI" id="CHEBI:128769"/>
    </ligand>
</feature>
<feature type="binding site" evidence="2">
    <location>
        <position position="223"/>
    </location>
    <ligand>
        <name>(2E)-4-hydroxy-3-methylbut-2-enyl diphosphate</name>
        <dbReference type="ChEBI" id="CHEBI:128753"/>
    </ligand>
</feature>
<feature type="binding site" evidence="2">
    <location>
        <position position="223"/>
    </location>
    <ligand>
        <name>dimethylallyl diphosphate</name>
        <dbReference type="ChEBI" id="CHEBI:57623"/>
    </ligand>
</feature>
<feature type="binding site" evidence="2">
    <location>
        <position position="223"/>
    </location>
    <ligand>
        <name>isopentenyl diphosphate</name>
        <dbReference type="ChEBI" id="CHEBI:128769"/>
    </ligand>
</feature>
<feature type="binding site" evidence="2">
    <location>
        <position position="265"/>
    </location>
    <ligand>
        <name>(2E)-4-hydroxy-3-methylbut-2-enyl diphosphate</name>
        <dbReference type="ChEBI" id="CHEBI:128753"/>
    </ligand>
</feature>
<feature type="binding site" evidence="2">
    <location>
        <position position="265"/>
    </location>
    <ligand>
        <name>dimethylallyl diphosphate</name>
        <dbReference type="ChEBI" id="CHEBI:57623"/>
    </ligand>
</feature>
<feature type="binding site" evidence="2">
    <location>
        <position position="265"/>
    </location>
    <ligand>
        <name>isopentenyl diphosphate</name>
        <dbReference type="ChEBI" id="CHEBI:128769"/>
    </ligand>
</feature>
<feature type="strand" evidence="6">
    <location>
        <begin position="3"/>
        <end position="6"/>
    </location>
</feature>
<feature type="helix" evidence="6">
    <location>
        <begin position="14"/>
        <end position="26"/>
    </location>
</feature>
<feature type="turn" evidence="6">
    <location>
        <begin position="27"/>
        <end position="29"/>
    </location>
</feature>
<feature type="strand" evidence="6">
    <location>
        <begin position="34"/>
        <end position="38"/>
    </location>
</feature>
<feature type="strand" evidence="6">
    <location>
        <begin position="40"/>
        <end position="42"/>
    </location>
</feature>
<feature type="helix" evidence="6">
    <location>
        <begin position="44"/>
        <end position="53"/>
    </location>
</feature>
<feature type="strand" evidence="6">
    <location>
        <begin position="55"/>
        <end position="57"/>
    </location>
</feature>
<feature type="strand" evidence="6">
    <location>
        <begin position="68"/>
        <end position="71"/>
    </location>
</feature>
<feature type="helix" evidence="6">
    <location>
        <begin position="78"/>
        <end position="86"/>
    </location>
</feature>
<feature type="strand" evidence="6">
    <location>
        <begin position="90"/>
        <end position="93"/>
    </location>
</feature>
<feature type="helix" evidence="6">
    <location>
        <begin position="97"/>
        <end position="111"/>
    </location>
</feature>
<feature type="strand" evidence="6">
    <location>
        <begin position="115"/>
        <end position="120"/>
    </location>
</feature>
<feature type="helix" evidence="6">
    <location>
        <begin position="125"/>
        <end position="136"/>
    </location>
</feature>
<feature type="strand" evidence="6">
    <location>
        <begin position="141"/>
        <end position="146"/>
    </location>
</feature>
<feature type="helix" evidence="6">
    <location>
        <begin position="147"/>
        <end position="155"/>
    </location>
</feature>
<feature type="strand" evidence="6">
    <location>
        <begin position="157"/>
        <end position="163"/>
    </location>
</feature>
<feature type="helix" evidence="6">
    <location>
        <begin position="169"/>
        <end position="182"/>
    </location>
</feature>
<feature type="strand" evidence="6">
    <location>
        <begin position="183"/>
        <end position="189"/>
    </location>
</feature>
<feature type="helix" evidence="6">
    <location>
        <begin position="195"/>
        <end position="206"/>
    </location>
</feature>
<feature type="helix" evidence="6">
    <location>
        <begin position="207"/>
        <end position="209"/>
    </location>
</feature>
<feature type="strand" evidence="6">
    <location>
        <begin position="210"/>
        <end position="217"/>
    </location>
</feature>
<feature type="helix" evidence="6">
    <location>
        <begin position="222"/>
        <end position="234"/>
    </location>
</feature>
<feature type="strand" evidence="6">
    <location>
        <begin position="236"/>
        <end position="243"/>
    </location>
</feature>
<feature type="helix" evidence="6">
    <location>
        <begin position="244"/>
        <end position="246"/>
    </location>
</feature>
<feature type="helix" evidence="6">
    <location>
        <begin position="249"/>
        <end position="252"/>
    </location>
</feature>
<feature type="strand" evidence="6">
    <location>
        <begin position="256"/>
        <end position="262"/>
    </location>
</feature>
<feature type="helix" evidence="6">
    <location>
        <begin position="268"/>
        <end position="280"/>
    </location>
</feature>
<sequence length="289" mass="32104">MVDIIIAEHAGFCFGVKRAVKLAEESLKESQGKVYTLGPIIHNPQEVNRLKNLGVFPSQGEEFKEGDTVIIRSHGIPPEKEEALRKKGLKVIDATCPYVKAVHEAVCQLTREGYFVVLVGEKNHPEVIGTLGYLRACNGKGIVVETLEDIGEALKHERVGIVAQTTQNEEFFKEVVGEIALWVKEVKVINTICNATSLRQESVKKLAPEVDVMIIIGGKNSGNTRRLYYISKELNPNTYHIETAEELQPEWFRGVKRVGISAGASTPDWIIEQVKSRIQEICEGQLVSS</sequence>
<dbReference type="EC" id="1.17.7.4" evidence="2 3"/>
<dbReference type="EMBL" id="AE000657">
    <property type="protein sequence ID" value="AAC07596.1"/>
    <property type="molecule type" value="Genomic_DNA"/>
</dbReference>
<dbReference type="PIR" id="G70449">
    <property type="entry name" value="G70449"/>
</dbReference>
<dbReference type="RefSeq" id="NP_214191.1">
    <property type="nucleotide sequence ID" value="NC_000918.1"/>
</dbReference>
<dbReference type="RefSeq" id="WP_010881128.1">
    <property type="nucleotide sequence ID" value="NC_000918.1"/>
</dbReference>
<dbReference type="PDB" id="3DNF">
    <property type="method" value="X-ray"/>
    <property type="resolution" value="1.65 A"/>
    <property type="chains" value="A/B=1-289"/>
</dbReference>
<dbReference type="PDBsum" id="3DNF"/>
<dbReference type="SMR" id="O67625"/>
<dbReference type="FunCoup" id="O67625">
    <property type="interactions" value="386"/>
</dbReference>
<dbReference type="STRING" id="224324.aq_1739"/>
<dbReference type="BindingDB" id="O67625"/>
<dbReference type="ChEMBL" id="CHEMBL2242741"/>
<dbReference type="EnsemblBacteria" id="AAC07596">
    <property type="protein sequence ID" value="AAC07596"/>
    <property type="gene ID" value="aq_1739"/>
</dbReference>
<dbReference type="KEGG" id="aae:aq_1739"/>
<dbReference type="PATRIC" id="fig|224324.8.peg.1338"/>
<dbReference type="eggNOG" id="COG0761">
    <property type="taxonomic scope" value="Bacteria"/>
</dbReference>
<dbReference type="HOGENOM" id="CLU_027486_0_1_0"/>
<dbReference type="InParanoid" id="O67625"/>
<dbReference type="OrthoDB" id="9804077at2"/>
<dbReference type="BRENDA" id="1.17.7.4">
    <property type="organism ID" value="396"/>
</dbReference>
<dbReference type="UniPathway" id="UPA00056">
    <property type="reaction ID" value="UER00097"/>
</dbReference>
<dbReference type="UniPathway" id="UPA00059">
    <property type="reaction ID" value="UER00105"/>
</dbReference>
<dbReference type="EvolutionaryTrace" id="O67625"/>
<dbReference type="Proteomes" id="UP000000798">
    <property type="component" value="Chromosome"/>
</dbReference>
<dbReference type="GO" id="GO:0005829">
    <property type="term" value="C:cytosol"/>
    <property type="evidence" value="ECO:0000318"/>
    <property type="project" value="GO_Central"/>
</dbReference>
<dbReference type="GO" id="GO:0051539">
    <property type="term" value="F:4 iron, 4 sulfur cluster binding"/>
    <property type="evidence" value="ECO:0007669"/>
    <property type="project" value="UniProtKB-UniRule"/>
</dbReference>
<dbReference type="GO" id="GO:0051745">
    <property type="term" value="F:4-hydroxy-3-methylbut-2-enyl diphosphate reductase activity"/>
    <property type="evidence" value="ECO:0000318"/>
    <property type="project" value="GO_Central"/>
</dbReference>
<dbReference type="GO" id="GO:0046872">
    <property type="term" value="F:metal ion binding"/>
    <property type="evidence" value="ECO:0007669"/>
    <property type="project" value="UniProtKB-KW"/>
</dbReference>
<dbReference type="GO" id="GO:0050992">
    <property type="term" value="P:dimethylallyl diphosphate biosynthetic process"/>
    <property type="evidence" value="ECO:0007669"/>
    <property type="project" value="UniProtKB-UniRule"/>
</dbReference>
<dbReference type="GO" id="GO:0019288">
    <property type="term" value="P:isopentenyl diphosphate biosynthetic process, methylerythritol 4-phosphate pathway"/>
    <property type="evidence" value="ECO:0000318"/>
    <property type="project" value="GO_Central"/>
</dbReference>
<dbReference type="GO" id="GO:0016114">
    <property type="term" value="P:terpenoid biosynthetic process"/>
    <property type="evidence" value="ECO:0007669"/>
    <property type="project" value="UniProtKB-UniRule"/>
</dbReference>
<dbReference type="CDD" id="cd13944">
    <property type="entry name" value="lytB_ispH"/>
    <property type="match status" value="1"/>
</dbReference>
<dbReference type="Gene3D" id="3.40.50.11270">
    <property type="match status" value="1"/>
</dbReference>
<dbReference type="Gene3D" id="3.40.1010.20">
    <property type="entry name" value="4-hydroxy-3-methylbut-2-enyl diphosphate reductase, catalytic domain"/>
    <property type="match status" value="2"/>
</dbReference>
<dbReference type="HAMAP" id="MF_00191">
    <property type="entry name" value="IspH"/>
    <property type="match status" value="1"/>
</dbReference>
<dbReference type="InterPro" id="IPR003451">
    <property type="entry name" value="LytB/IspH"/>
</dbReference>
<dbReference type="NCBIfam" id="TIGR00216">
    <property type="entry name" value="ispH_lytB"/>
    <property type="match status" value="1"/>
</dbReference>
<dbReference type="NCBIfam" id="NF002187">
    <property type="entry name" value="PRK01045.1-1"/>
    <property type="match status" value="1"/>
</dbReference>
<dbReference type="PANTHER" id="PTHR30426">
    <property type="entry name" value="4-HYDROXY-3-METHYLBUT-2-ENYL DIPHOSPHATE REDUCTASE"/>
    <property type="match status" value="1"/>
</dbReference>
<dbReference type="PANTHER" id="PTHR30426:SF0">
    <property type="entry name" value="4-HYDROXY-3-METHYLBUT-2-ENYL DIPHOSPHATE REDUCTASE"/>
    <property type="match status" value="1"/>
</dbReference>
<dbReference type="Pfam" id="PF02401">
    <property type="entry name" value="LYTB"/>
    <property type="match status" value="1"/>
</dbReference>
<comment type="function">
    <text evidence="2 3">Catalyzes the conversion of 1-hydroxy-2-methyl-2-(E)-butenyl 4-diphosphate (HMBPP) into a mixture of isopentenyl diphosphate (IPP) and dimethylallyl diphosphate (DMAPP). Acts in the terminal step of the DOXP/MEP pathway for isoprenoid precursor biosynthesis.</text>
</comment>
<comment type="catalytic activity">
    <reaction evidence="2 3">
        <text>isopentenyl diphosphate + 2 oxidized [2Fe-2S]-[ferredoxin] + H2O = (2E)-4-hydroxy-3-methylbut-2-enyl diphosphate + 2 reduced [2Fe-2S]-[ferredoxin] + 2 H(+)</text>
        <dbReference type="Rhea" id="RHEA:24488"/>
        <dbReference type="Rhea" id="RHEA-COMP:10000"/>
        <dbReference type="Rhea" id="RHEA-COMP:10001"/>
        <dbReference type="ChEBI" id="CHEBI:15377"/>
        <dbReference type="ChEBI" id="CHEBI:15378"/>
        <dbReference type="ChEBI" id="CHEBI:33737"/>
        <dbReference type="ChEBI" id="CHEBI:33738"/>
        <dbReference type="ChEBI" id="CHEBI:128753"/>
        <dbReference type="ChEBI" id="CHEBI:128769"/>
        <dbReference type="EC" id="1.17.7.4"/>
    </reaction>
</comment>
<comment type="catalytic activity">
    <reaction evidence="2 3">
        <text>dimethylallyl diphosphate + 2 oxidized [2Fe-2S]-[ferredoxin] + H2O = (2E)-4-hydroxy-3-methylbut-2-enyl diphosphate + 2 reduced [2Fe-2S]-[ferredoxin] + 2 H(+)</text>
        <dbReference type="Rhea" id="RHEA:24825"/>
        <dbReference type="Rhea" id="RHEA-COMP:10000"/>
        <dbReference type="Rhea" id="RHEA-COMP:10001"/>
        <dbReference type="ChEBI" id="CHEBI:15377"/>
        <dbReference type="ChEBI" id="CHEBI:15378"/>
        <dbReference type="ChEBI" id="CHEBI:33737"/>
        <dbReference type="ChEBI" id="CHEBI:33738"/>
        <dbReference type="ChEBI" id="CHEBI:57623"/>
        <dbReference type="ChEBI" id="CHEBI:128753"/>
        <dbReference type="EC" id="1.17.7.4"/>
    </reaction>
</comment>
<comment type="cofactor">
    <cofactor evidence="2">
        <name>[4Fe-4S] cluster</name>
        <dbReference type="ChEBI" id="CHEBI:49883"/>
    </cofactor>
    <text evidence="1 2 4">Was shown to bind 1 [3Fe-4S] cluster per subunit (PubMed:19035630). However, it likely initially contains a [4Fe-4S] cluster which easily degrades into a [3Fe-4S] form in the presence of oxygen (By similarity).</text>
</comment>
<comment type="activity regulation">
    <text evidence="3">Highly sensitive to dioxygen.</text>
</comment>
<comment type="biophysicochemical properties">
    <kinetics>
        <KM evidence="3">590 uM for 1-hydroxy-2-methyl-2-(E)-butenyl 4-diphosphate</KM>
    </kinetics>
    <phDependence>
        <text evidence="3">Optimum pH is 7.0-7.5.</text>
    </phDependence>
    <temperatureDependence>
        <text evidence="3">Optimum temperature is 60 degrees Celsius.</text>
    </temperatureDependence>
</comment>
<comment type="pathway">
    <text evidence="2">Isoprenoid biosynthesis; dimethylallyl diphosphate biosynthesis; dimethylallyl diphosphate from (2E)-4-hydroxy-3-methylbutenyl diphosphate: step 1/1.</text>
</comment>
<comment type="pathway">
    <text evidence="2">Isoprenoid biosynthesis; isopentenyl diphosphate biosynthesis via DXP pathway; isopentenyl diphosphate from 1-deoxy-D-xylulose 5-phosphate: step 6/6.</text>
</comment>
<comment type="similarity">
    <text evidence="2">Belongs to the IspH family.</text>
</comment>
<accession>O67625</accession>
<gene>
    <name evidence="2" type="primary">ispH</name>
    <name type="synonym">lytB</name>
    <name type="ordered locus">aq_1739</name>
</gene>
<proteinExistence type="evidence at protein level"/>
<protein>
    <recommendedName>
        <fullName evidence="2">4-hydroxy-3-methylbut-2-enyl diphosphate reductase</fullName>
        <shortName evidence="2">HMBPP reductase</shortName>
        <ecNumber evidence="2 3">1.17.7.4</ecNumber>
    </recommendedName>
</protein>
<organism>
    <name type="scientific">Aquifex aeolicus (strain VF5)</name>
    <dbReference type="NCBI Taxonomy" id="224324"/>
    <lineage>
        <taxon>Bacteria</taxon>
        <taxon>Pseudomonadati</taxon>
        <taxon>Aquificota</taxon>
        <taxon>Aquificia</taxon>
        <taxon>Aquificales</taxon>
        <taxon>Aquificaceae</taxon>
        <taxon>Aquifex</taxon>
    </lineage>
</organism>
<keyword id="KW-0002">3D-structure</keyword>
<keyword id="KW-0004">4Fe-4S</keyword>
<keyword id="KW-0408">Iron</keyword>
<keyword id="KW-0411">Iron-sulfur</keyword>
<keyword id="KW-0414">Isoprene biosynthesis</keyword>
<keyword id="KW-0479">Metal-binding</keyword>
<keyword id="KW-0560">Oxidoreductase</keyword>
<keyword id="KW-1185">Reference proteome</keyword>
<name>ISPH_AQUAE</name>